<protein>
    <recommendedName>
        <fullName evidence="1">Nucleoside diphosphate kinase</fullName>
        <shortName evidence="1">NDK</shortName>
        <shortName evidence="1">NDP kinase</shortName>
        <ecNumber evidence="1">2.7.4.6</ecNumber>
    </recommendedName>
    <alternativeName>
        <fullName evidence="1">Nucleoside-2-P kinase</fullName>
    </alternativeName>
</protein>
<accession>P65538</accession>
<accession>Q8NKZ9</accession>
<dbReference type="EC" id="2.7.4.6" evidence="1"/>
<dbReference type="EMBL" id="AE008923">
    <property type="protein sequence ID" value="AAM36877.1"/>
    <property type="molecule type" value="Genomic_DNA"/>
</dbReference>
<dbReference type="RefSeq" id="WP_002812972.1">
    <property type="nucleotide sequence ID" value="NC_003919.1"/>
</dbReference>
<dbReference type="SMR" id="P65538"/>
<dbReference type="GeneID" id="98193442"/>
<dbReference type="KEGG" id="xac:XAC2015"/>
<dbReference type="eggNOG" id="COG0105">
    <property type="taxonomic scope" value="Bacteria"/>
</dbReference>
<dbReference type="HOGENOM" id="CLU_060216_8_1_6"/>
<dbReference type="Proteomes" id="UP000000576">
    <property type="component" value="Chromosome"/>
</dbReference>
<dbReference type="GO" id="GO:0005737">
    <property type="term" value="C:cytoplasm"/>
    <property type="evidence" value="ECO:0007669"/>
    <property type="project" value="UniProtKB-SubCell"/>
</dbReference>
<dbReference type="GO" id="GO:0005524">
    <property type="term" value="F:ATP binding"/>
    <property type="evidence" value="ECO:0007669"/>
    <property type="project" value="UniProtKB-UniRule"/>
</dbReference>
<dbReference type="GO" id="GO:0046872">
    <property type="term" value="F:metal ion binding"/>
    <property type="evidence" value="ECO:0007669"/>
    <property type="project" value="UniProtKB-KW"/>
</dbReference>
<dbReference type="GO" id="GO:0004550">
    <property type="term" value="F:nucleoside diphosphate kinase activity"/>
    <property type="evidence" value="ECO:0007669"/>
    <property type="project" value="UniProtKB-UniRule"/>
</dbReference>
<dbReference type="GO" id="GO:0006241">
    <property type="term" value="P:CTP biosynthetic process"/>
    <property type="evidence" value="ECO:0007669"/>
    <property type="project" value="UniProtKB-UniRule"/>
</dbReference>
<dbReference type="GO" id="GO:0006183">
    <property type="term" value="P:GTP biosynthetic process"/>
    <property type="evidence" value="ECO:0007669"/>
    <property type="project" value="UniProtKB-UniRule"/>
</dbReference>
<dbReference type="GO" id="GO:0006228">
    <property type="term" value="P:UTP biosynthetic process"/>
    <property type="evidence" value="ECO:0007669"/>
    <property type="project" value="UniProtKB-UniRule"/>
</dbReference>
<dbReference type="CDD" id="cd04413">
    <property type="entry name" value="NDPk_I"/>
    <property type="match status" value="1"/>
</dbReference>
<dbReference type="FunFam" id="3.30.70.141:FF:000001">
    <property type="entry name" value="Nucleoside diphosphate kinase"/>
    <property type="match status" value="1"/>
</dbReference>
<dbReference type="Gene3D" id="3.30.70.141">
    <property type="entry name" value="Nucleoside diphosphate kinase-like domain"/>
    <property type="match status" value="1"/>
</dbReference>
<dbReference type="HAMAP" id="MF_00451">
    <property type="entry name" value="NDP_kinase"/>
    <property type="match status" value="1"/>
</dbReference>
<dbReference type="InterPro" id="IPR034907">
    <property type="entry name" value="NDK-like_dom"/>
</dbReference>
<dbReference type="InterPro" id="IPR036850">
    <property type="entry name" value="NDK-like_dom_sf"/>
</dbReference>
<dbReference type="InterPro" id="IPR001564">
    <property type="entry name" value="Nucleoside_diP_kinase"/>
</dbReference>
<dbReference type="InterPro" id="IPR023005">
    <property type="entry name" value="Nucleoside_diP_kinase_AS"/>
</dbReference>
<dbReference type="NCBIfam" id="NF001908">
    <property type="entry name" value="PRK00668.1"/>
    <property type="match status" value="1"/>
</dbReference>
<dbReference type="PANTHER" id="PTHR11349">
    <property type="entry name" value="NUCLEOSIDE DIPHOSPHATE KINASE"/>
    <property type="match status" value="1"/>
</dbReference>
<dbReference type="Pfam" id="PF00334">
    <property type="entry name" value="NDK"/>
    <property type="match status" value="1"/>
</dbReference>
<dbReference type="PRINTS" id="PR01243">
    <property type="entry name" value="NUCDPKINASE"/>
</dbReference>
<dbReference type="SMART" id="SM00562">
    <property type="entry name" value="NDK"/>
    <property type="match status" value="1"/>
</dbReference>
<dbReference type="SUPFAM" id="SSF54919">
    <property type="entry name" value="Nucleoside diphosphate kinase, NDK"/>
    <property type="match status" value="1"/>
</dbReference>
<dbReference type="PROSITE" id="PS00469">
    <property type="entry name" value="NDPK"/>
    <property type="match status" value="1"/>
</dbReference>
<dbReference type="PROSITE" id="PS51374">
    <property type="entry name" value="NDPK_LIKE"/>
    <property type="match status" value="1"/>
</dbReference>
<keyword id="KW-0067">ATP-binding</keyword>
<keyword id="KW-0963">Cytoplasm</keyword>
<keyword id="KW-0418">Kinase</keyword>
<keyword id="KW-0460">Magnesium</keyword>
<keyword id="KW-0479">Metal-binding</keyword>
<keyword id="KW-0546">Nucleotide metabolism</keyword>
<keyword id="KW-0547">Nucleotide-binding</keyword>
<keyword id="KW-0597">Phosphoprotein</keyword>
<keyword id="KW-0808">Transferase</keyword>
<feature type="chain" id="PRO_0000137079" description="Nucleoside diphosphate kinase">
    <location>
        <begin position="1"/>
        <end position="141"/>
    </location>
</feature>
<feature type="active site" description="Pros-phosphohistidine intermediate" evidence="1">
    <location>
        <position position="117"/>
    </location>
</feature>
<feature type="binding site" evidence="1">
    <location>
        <position position="11"/>
    </location>
    <ligand>
        <name>ATP</name>
        <dbReference type="ChEBI" id="CHEBI:30616"/>
    </ligand>
</feature>
<feature type="binding site" evidence="1">
    <location>
        <position position="59"/>
    </location>
    <ligand>
        <name>ATP</name>
        <dbReference type="ChEBI" id="CHEBI:30616"/>
    </ligand>
</feature>
<feature type="binding site" evidence="1">
    <location>
        <position position="87"/>
    </location>
    <ligand>
        <name>ATP</name>
        <dbReference type="ChEBI" id="CHEBI:30616"/>
    </ligand>
</feature>
<feature type="binding site" evidence="1">
    <location>
        <position position="93"/>
    </location>
    <ligand>
        <name>ATP</name>
        <dbReference type="ChEBI" id="CHEBI:30616"/>
    </ligand>
</feature>
<feature type="binding site" evidence="1">
    <location>
        <position position="104"/>
    </location>
    <ligand>
        <name>ATP</name>
        <dbReference type="ChEBI" id="CHEBI:30616"/>
    </ligand>
</feature>
<feature type="binding site" evidence="1">
    <location>
        <position position="114"/>
    </location>
    <ligand>
        <name>ATP</name>
        <dbReference type="ChEBI" id="CHEBI:30616"/>
    </ligand>
</feature>
<gene>
    <name evidence="1" type="primary">ndk</name>
    <name type="ordered locus">XAC2015</name>
</gene>
<evidence type="ECO:0000255" key="1">
    <source>
        <dbReference type="HAMAP-Rule" id="MF_00451"/>
    </source>
</evidence>
<comment type="function">
    <text evidence="1">Major role in the synthesis of nucleoside triphosphates other than ATP. The ATP gamma phosphate is transferred to the NDP beta phosphate via a ping-pong mechanism, using a phosphorylated active-site intermediate.</text>
</comment>
<comment type="catalytic activity">
    <reaction evidence="1">
        <text>a 2'-deoxyribonucleoside 5'-diphosphate + ATP = a 2'-deoxyribonucleoside 5'-triphosphate + ADP</text>
        <dbReference type="Rhea" id="RHEA:44640"/>
        <dbReference type="ChEBI" id="CHEBI:30616"/>
        <dbReference type="ChEBI" id="CHEBI:61560"/>
        <dbReference type="ChEBI" id="CHEBI:73316"/>
        <dbReference type="ChEBI" id="CHEBI:456216"/>
        <dbReference type="EC" id="2.7.4.6"/>
    </reaction>
</comment>
<comment type="catalytic activity">
    <reaction evidence="1">
        <text>a ribonucleoside 5'-diphosphate + ATP = a ribonucleoside 5'-triphosphate + ADP</text>
        <dbReference type="Rhea" id="RHEA:18113"/>
        <dbReference type="ChEBI" id="CHEBI:30616"/>
        <dbReference type="ChEBI" id="CHEBI:57930"/>
        <dbReference type="ChEBI" id="CHEBI:61557"/>
        <dbReference type="ChEBI" id="CHEBI:456216"/>
        <dbReference type="EC" id="2.7.4.6"/>
    </reaction>
</comment>
<comment type="cofactor">
    <cofactor evidence="1">
        <name>Mg(2+)</name>
        <dbReference type="ChEBI" id="CHEBI:18420"/>
    </cofactor>
</comment>
<comment type="subunit">
    <text evidence="1">Homotetramer.</text>
</comment>
<comment type="subcellular location">
    <subcellularLocation>
        <location evidence="1">Cytoplasm</location>
    </subcellularLocation>
</comment>
<comment type="similarity">
    <text evidence="1">Belongs to the NDK family.</text>
</comment>
<proteinExistence type="inferred from homology"/>
<organism>
    <name type="scientific">Xanthomonas axonopodis pv. citri (strain 306)</name>
    <dbReference type="NCBI Taxonomy" id="190486"/>
    <lineage>
        <taxon>Bacteria</taxon>
        <taxon>Pseudomonadati</taxon>
        <taxon>Pseudomonadota</taxon>
        <taxon>Gammaproteobacteria</taxon>
        <taxon>Lysobacterales</taxon>
        <taxon>Lysobacteraceae</taxon>
        <taxon>Xanthomonas</taxon>
    </lineage>
</organism>
<name>NDK_XANAC</name>
<reference key="1">
    <citation type="journal article" date="2002" name="Nature">
        <title>Comparison of the genomes of two Xanthomonas pathogens with differing host specificities.</title>
        <authorList>
            <person name="da Silva A.C.R."/>
            <person name="Ferro J.A."/>
            <person name="Reinach F.C."/>
            <person name="Farah C.S."/>
            <person name="Furlan L.R."/>
            <person name="Quaggio R.B."/>
            <person name="Monteiro-Vitorello C.B."/>
            <person name="Van Sluys M.A."/>
            <person name="Almeida N.F. Jr."/>
            <person name="Alves L.M.C."/>
            <person name="do Amaral A.M."/>
            <person name="Bertolini M.C."/>
            <person name="Camargo L.E.A."/>
            <person name="Camarotte G."/>
            <person name="Cannavan F."/>
            <person name="Cardozo J."/>
            <person name="Chambergo F."/>
            <person name="Ciapina L.P."/>
            <person name="Cicarelli R.M.B."/>
            <person name="Coutinho L.L."/>
            <person name="Cursino-Santos J.R."/>
            <person name="El-Dorry H."/>
            <person name="Faria J.B."/>
            <person name="Ferreira A.J.S."/>
            <person name="Ferreira R.C.C."/>
            <person name="Ferro M.I.T."/>
            <person name="Formighieri E.F."/>
            <person name="Franco M.C."/>
            <person name="Greggio C.C."/>
            <person name="Gruber A."/>
            <person name="Katsuyama A.M."/>
            <person name="Kishi L.T."/>
            <person name="Leite R.P."/>
            <person name="Lemos E.G.M."/>
            <person name="Lemos M.V.F."/>
            <person name="Locali E.C."/>
            <person name="Machado M.A."/>
            <person name="Madeira A.M.B.N."/>
            <person name="Martinez-Rossi N.M."/>
            <person name="Martins E.C."/>
            <person name="Meidanis J."/>
            <person name="Menck C.F.M."/>
            <person name="Miyaki C.Y."/>
            <person name="Moon D.H."/>
            <person name="Moreira L.M."/>
            <person name="Novo M.T.M."/>
            <person name="Okura V.K."/>
            <person name="Oliveira M.C."/>
            <person name="Oliveira V.R."/>
            <person name="Pereira H.A."/>
            <person name="Rossi A."/>
            <person name="Sena J.A.D."/>
            <person name="Silva C."/>
            <person name="de Souza R.F."/>
            <person name="Spinola L.A.F."/>
            <person name="Takita M.A."/>
            <person name="Tamura R.E."/>
            <person name="Teixeira E.C."/>
            <person name="Tezza R.I.D."/>
            <person name="Trindade dos Santos M."/>
            <person name="Truffi D."/>
            <person name="Tsai S.M."/>
            <person name="White F.F."/>
            <person name="Setubal J.C."/>
            <person name="Kitajima J.P."/>
        </authorList>
    </citation>
    <scope>NUCLEOTIDE SEQUENCE [LARGE SCALE GENOMIC DNA]</scope>
    <source>
        <strain>306</strain>
    </source>
</reference>
<sequence>MALERTLSIIKPDAVAKNVIGEIYSRFEKAGLKVVAAKYKQLSRREAEGFYAVHRERPFFNALVEFMISGPVMIQALEGENAVAAHRDLLGATNPKDAAPGTIRADFADSIDANAAHGSDSVENAANEVAYFFAATEVVSR</sequence>